<name>TBA_OCTVU</name>
<evidence type="ECO:0000250" key="1"/>
<evidence type="ECO:0000250" key="2">
    <source>
        <dbReference type="UniProtKB" id="P68363"/>
    </source>
</evidence>
<evidence type="ECO:0000305" key="3"/>
<dbReference type="EC" id="3.6.5.-" evidence="2"/>
<dbReference type="EMBL" id="X15845">
    <property type="protein sequence ID" value="CAA33844.1"/>
    <property type="molecule type" value="mRNA"/>
</dbReference>
<dbReference type="PIR" id="A61544">
    <property type="entry name" value="A61544"/>
</dbReference>
<dbReference type="SMR" id="P24635"/>
<dbReference type="Proteomes" id="UP000515154">
    <property type="component" value="Unplaced"/>
</dbReference>
<dbReference type="GO" id="GO:0005737">
    <property type="term" value="C:cytoplasm"/>
    <property type="evidence" value="ECO:0007669"/>
    <property type="project" value="UniProtKB-KW"/>
</dbReference>
<dbReference type="GO" id="GO:0005874">
    <property type="term" value="C:microtubule"/>
    <property type="evidence" value="ECO:0007669"/>
    <property type="project" value="UniProtKB-KW"/>
</dbReference>
<dbReference type="GO" id="GO:0005525">
    <property type="term" value="F:GTP binding"/>
    <property type="evidence" value="ECO:0007669"/>
    <property type="project" value="UniProtKB-KW"/>
</dbReference>
<dbReference type="GO" id="GO:0016787">
    <property type="term" value="F:hydrolase activity"/>
    <property type="evidence" value="ECO:0007669"/>
    <property type="project" value="UniProtKB-KW"/>
</dbReference>
<dbReference type="GO" id="GO:0005200">
    <property type="term" value="F:structural constituent of cytoskeleton"/>
    <property type="evidence" value="ECO:0007669"/>
    <property type="project" value="InterPro"/>
</dbReference>
<dbReference type="GO" id="GO:0007017">
    <property type="term" value="P:microtubule-based process"/>
    <property type="evidence" value="ECO:0007669"/>
    <property type="project" value="InterPro"/>
</dbReference>
<dbReference type="FunFam" id="1.10.287.600:FF:000005">
    <property type="entry name" value="Tubulin alpha chain"/>
    <property type="match status" value="1"/>
</dbReference>
<dbReference type="FunFam" id="3.30.1330.20:FF:000001">
    <property type="entry name" value="Tubulin alpha chain"/>
    <property type="match status" value="1"/>
</dbReference>
<dbReference type="Gene3D" id="1.10.287.600">
    <property type="entry name" value="Helix hairpin bin"/>
    <property type="match status" value="1"/>
</dbReference>
<dbReference type="Gene3D" id="3.30.1330.20">
    <property type="entry name" value="Tubulin/FtsZ, C-terminal domain"/>
    <property type="match status" value="1"/>
</dbReference>
<dbReference type="Gene3D" id="3.40.50.1440">
    <property type="entry name" value="Tubulin/FtsZ, GTPase domain"/>
    <property type="match status" value="1"/>
</dbReference>
<dbReference type="InterPro" id="IPR002452">
    <property type="entry name" value="Alpha_tubulin"/>
</dbReference>
<dbReference type="InterPro" id="IPR008280">
    <property type="entry name" value="Tub_FtsZ_C"/>
</dbReference>
<dbReference type="InterPro" id="IPR000217">
    <property type="entry name" value="Tubulin"/>
</dbReference>
<dbReference type="InterPro" id="IPR037103">
    <property type="entry name" value="Tubulin/FtsZ-like_C"/>
</dbReference>
<dbReference type="InterPro" id="IPR018316">
    <property type="entry name" value="Tubulin/FtsZ_2-layer-sand-dom"/>
</dbReference>
<dbReference type="InterPro" id="IPR036525">
    <property type="entry name" value="Tubulin/FtsZ_GTPase_sf"/>
</dbReference>
<dbReference type="InterPro" id="IPR023123">
    <property type="entry name" value="Tubulin_C"/>
</dbReference>
<dbReference type="PANTHER" id="PTHR11588">
    <property type="entry name" value="TUBULIN"/>
    <property type="match status" value="1"/>
</dbReference>
<dbReference type="Pfam" id="PF03953">
    <property type="entry name" value="Tubulin_C"/>
    <property type="match status" value="1"/>
</dbReference>
<dbReference type="PRINTS" id="PR01162">
    <property type="entry name" value="ALPHATUBULIN"/>
</dbReference>
<dbReference type="SMART" id="SM00865">
    <property type="entry name" value="Tubulin_C"/>
    <property type="match status" value="1"/>
</dbReference>
<dbReference type="SUPFAM" id="SSF55307">
    <property type="entry name" value="Tubulin C-terminal domain-like"/>
    <property type="match status" value="1"/>
</dbReference>
<dbReference type="SUPFAM" id="SSF52490">
    <property type="entry name" value="Tubulin nucleotide-binding domain-like"/>
    <property type="match status" value="1"/>
</dbReference>
<proteinExistence type="evidence at transcript level"/>
<reference key="1">
    <citation type="journal article" date="1988" name="Dokl. Akad. Nauk SSSR">
        <title>Isolation and structural characterization of cDNAs coding for alpha-tubulin of the octopus eye lens.</title>
        <authorList>
            <person name="Zinov'Eva R.D."/>
            <person name="Aleinikova K.S."/>
            <person name="Tomarev S.I."/>
        </authorList>
    </citation>
    <scope>NUCLEOTIDE SEQUENCE [MRNA]</scope>
    <source>
        <tissue>Lens</tissue>
    </source>
</reference>
<protein>
    <recommendedName>
        <fullName>Tubulin alpha chain</fullName>
        <ecNumber evidence="2">3.6.5.-</ecNumber>
    </recommendedName>
</protein>
<keyword id="KW-0963">Cytoplasm</keyword>
<keyword id="KW-0206">Cytoskeleton</keyword>
<keyword id="KW-0342">GTP-binding</keyword>
<keyword id="KW-0378">Hydrolase</keyword>
<keyword id="KW-0493">Microtubule</keyword>
<keyword id="KW-0547">Nucleotide-binding</keyword>
<keyword id="KW-1185">Reference proteome</keyword>
<organism>
    <name type="scientific">Octopus vulgaris</name>
    <name type="common">Common octopus</name>
    <dbReference type="NCBI Taxonomy" id="6645"/>
    <lineage>
        <taxon>Eukaryota</taxon>
        <taxon>Metazoa</taxon>
        <taxon>Spiralia</taxon>
        <taxon>Lophotrochozoa</taxon>
        <taxon>Mollusca</taxon>
        <taxon>Cephalopoda</taxon>
        <taxon>Coleoidea</taxon>
        <taxon>Octopodiformes</taxon>
        <taxon>Octopoda</taxon>
        <taxon>Incirrata</taxon>
        <taxon>Octopodidae</taxon>
        <taxon>Octopus</taxon>
    </lineage>
</organism>
<accession>P24635</accession>
<sequence>ICKRNLDIERPSYTNLNRLISQVVSSITASLRFDGALNVDLTEFQTNLVPYPRIHFPLVTYAPIISAEKAYHEQLAVAEVTSACFEPANQMVKCDPRHGKYMACCMLYRGDVVPKDVNAAIATIKTKRSIQFVDWCPTGFKVGINYQPPTVVLGGDLAKVQRAVCMLSNTTAVAEAWARLDHKFDLMYAKRAFVHWYVGEGMEEGEFSEAREDLAALEKDYEEVGLDTFEAEEEEGGDEY</sequence>
<comment type="function">
    <text>Tubulin is the major constituent of microtubules, a cylinder consisting of laterally associated linear protofilaments composed of alpha- and beta-tubulin heterodimers. Microtubules grow by the addition of GTP-tubulin dimers to the microtubule end, where a stabilizing cap forms. Below the cap, tubulin dimers are in GDP-bound state, owing to GTPase activity of alpha-tubulin.</text>
</comment>
<comment type="catalytic activity">
    <reaction evidence="2">
        <text>GTP + H2O = GDP + phosphate + H(+)</text>
        <dbReference type="Rhea" id="RHEA:19669"/>
        <dbReference type="ChEBI" id="CHEBI:15377"/>
        <dbReference type="ChEBI" id="CHEBI:15378"/>
        <dbReference type="ChEBI" id="CHEBI:37565"/>
        <dbReference type="ChEBI" id="CHEBI:43474"/>
        <dbReference type="ChEBI" id="CHEBI:58189"/>
    </reaction>
    <physiologicalReaction direction="left-to-right" evidence="2">
        <dbReference type="Rhea" id="RHEA:19670"/>
    </physiologicalReaction>
</comment>
<comment type="cofactor">
    <cofactor evidence="2">
        <name>Mg(2+)</name>
        <dbReference type="ChEBI" id="CHEBI:18420"/>
    </cofactor>
</comment>
<comment type="subunit">
    <text>Dimer of alpha and beta chains. A typical microtubule is a hollow water-filled tube with an outer diameter of 25 nm and an inner diameter of 15 nM. Alpha-beta heterodimers associate head-to-tail to form protofilaments running lengthwise along the microtubule wall with the beta-tubulin subunit facing the microtubule plus end conferring a structural polarity. Microtubules usually have 13 protofilaments but different protofilament numbers can be found in some organisms and specialized cells.</text>
</comment>
<comment type="subcellular location">
    <subcellularLocation>
        <location>Cytoplasm</location>
        <location>Cytoskeleton</location>
    </subcellularLocation>
</comment>
<comment type="PTM">
    <text evidence="1">Undergoes a tyrosination/detyrosination cycle, the cyclic removal and re-addition of a C-terminal tyrosine residue by the enzymes tubulin tyrosine carboxypeptidase (TTCP) and tubulin tyrosine ligase (TTL), respectively.</text>
</comment>
<comment type="similarity">
    <text evidence="3">Belongs to the tubulin family.</text>
</comment>
<feature type="chain" id="PRO_0000048203" description="Tubulin alpha chain">
    <location>
        <begin position="1" status="less than"/>
        <end position="240"/>
    </location>
</feature>
<feature type="active site" evidence="2">
    <location>
        <position position="43"/>
    </location>
</feature>
<feature type="binding site" evidence="2">
    <location>
        <position position="17"/>
    </location>
    <ligand>
        <name>GTP</name>
        <dbReference type="ChEBI" id="CHEBI:37565"/>
    </ligand>
</feature>
<feature type="site" description="Involved in polymerization">
    <location>
        <position position="240"/>
    </location>
</feature>
<feature type="non-terminal residue">
    <location>
        <position position="1"/>
    </location>
</feature>